<feature type="chain" id="PRO_0000192124" description="Bifunctional purine biosynthesis protein PurH">
    <location>
        <begin position="1"/>
        <end position="492"/>
    </location>
</feature>
<feature type="domain" description="MGS-like" evidence="2">
    <location>
        <begin position="1"/>
        <end position="144"/>
    </location>
</feature>
<accession>P67544</accession>
<accession>Q99V24</accession>
<reference key="1">
    <citation type="journal article" date="2001" name="Lancet">
        <title>Whole genome sequencing of meticillin-resistant Staphylococcus aureus.</title>
        <authorList>
            <person name="Kuroda M."/>
            <person name="Ohta T."/>
            <person name="Uchiyama I."/>
            <person name="Baba T."/>
            <person name="Yuzawa H."/>
            <person name="Kobayashi I."/>
            <person name="Cui L."/>
            <person name="Oguchi A."/>
            <person name="Aoki K."/>
            <person name="Nagai Y."/>
            <person name="Lian J.-Q."/>
            <person name="Ito T."/>
            <person name="Kanamori M."/>
            <person name="Matsumaru H."/>
            <person name="Maruyama A."/>
            <person name="Murakami H."/>
            <person name="Hosoyama A."/>
            <person name="Mizutani-Ui Y."/>
            <person name="Takahashi N.K."/>
            <person name="Sawano T."/>
            <person name="Inoue R."/>
            <person name="Kaito C."/>
            <person name="Sekimizu K."/>
            <person name="Hirakawa H."/>
            <person name="Kuhara S."/>
            <person name="Goto S."/>
            <person name="Yabuzaki J."/>
            <person name="Kanehisa M."/>
            <person name="Yamashita A."/>
            <person name="Oshima K."/>
            <person name="Furuya K."/>
            <person name="Yoshino C."/>
            <person name="Shiba T."/>
            <person name="Hattori M."/>
            <person name="Ogasawara N."/>
            <person name="Hayashi H."/>
            <person name="Hiramatsu K."/>
        </authorList>
    </citation>
    <scope>NUCLEOTIDE SEQUENCE [LARGE SCALE GENOMIC DNA]</scope>
    <source>
        <strain>N315</strain>
    </source>
</reference>
<reference key="2">
    <citation type="submission" date="2007-10" db="UniProtKB">
        <title>Shotgun proteomic analysis of total and membrane protein extracts of S. aureus strain N315.</title>
        <authorList>
            <person name="Vaezzadeh A.R."/>
            <person name="Deshusses J."/>
            <person name="Lescuyer P."/>
            <person name="Hochstrasser D.F."/>
        </authorList>
    </citation>
    <scope>IDENTIFICATION BY MASS SPECTROMETRY [LARGE SCALE ANALYSIS]</scope>
    <source>
        <strain>N315</strain>
    </source>
</reference>
<comment type="catalytic activity">
    <reaction evidence="1">
        <text>(6R)-10-formyltetrahydrofolate + 5-amino-1-(5-phospho-beta-D-ribosyl)imidazole-4-carboxamide = 5-formamido-1-(5-phospho-D-ribosyl)imidazole-4-carboxamide + (6S)-5,6,7,8-tetrahydrofolate</text>
        <dbReference type="Rhea" id="RHEA:22192"/>
        <dbReference type="ChEBI" id="CHEBI:57453"/>
        <dbReference type="ChEBI" id="CHEBI:58467"/>
        <dbReference type="ChEBI" id="CHEBI:58475"/>
        <dbReference type="ChEBI" id="CHEBI:195366"/>
        <dbReference type="EC" id="2.1.2.3"/>
    </reaction>
</comment>
<comment type="catalytic activity">
    <reaction evidence="1">
        <text>IMP + H2O = 5-formamido-1-(5-phospho-D-ribosyl)imidazole-4-carboxamide</text>
        <dbReference type="Rhea" id="RHEA:18445"/>
        <dbReference type="ChEBI" id="CHEBI:15377"/>
        <dbReference type="ChEBI" id="CHEBI:58053"/>
        <dbReference type="ChEBI" id="CHEBI:58467"/>
        <dbReference type="EC" id="3.5.4.10"/>
    </reaction>
</comment>
<comment type="pathway">
    <text evidence="1">Purine metabolism; IMP biosynthesis via de novo pathway; 5-formamido-1-(5-phospho-D-ribosyl)imidazole-4-carboxamide from 5-amino-1-(5-phospho-D-ribosyl)imidazole-4-carboxamide (10-formyl THF route): step 1/1.</text>
</comment>
<comment type="pathway">
    <text evidence="1">Purine metabolism; IMP biosynthesis via de novo pathway; IMP from 5-formamido-1-(5-phospho-D-ribosyl)imidazole-4-carboxamide: step 1/1.</text>
</comment>
<comment type="domain">
    <text evidence="1">The IMP cyclohydrolase activity resides in the N-terminal region.</text>
</comment>
<comment type="similarity">
    <text evidence="1">Belongs to the PurH family.</text>
</comment>
<comment type="sequence caution" evidence="3">
    <conflict type="erroneous initiation">
        <sequence resource="EMBL-CDS" id="BAB42170"/>
    </conflict>
</comment>
<gene>
    <name evidence="1" type="primary">purH</name>
    <name type="ordered locus">SA0925</name>
</gene>
<organism>
    <name type="scientific">Staphylococcus aureus (strain N315)</name>
    <dbReference type="NCBI Taxonomy" id="158879"/>
    <lineage>
        <taxon>Bacteria</taxon>
        <taxon>Bacillati</taxon>
        <taxon>Bacillota</taxon>
        <taxon>Bacilli</taxon>
        <taxon>Bacillales</taxon>
        <taxon>Staphylococcaceae</taxon>
        <taxon>Staphylococcus</taxon>
    </lineage>
</organism>
<sequence length="492" mass="54327">MKKAILSVSNKTGIVEFAKALTQLNYELYSTGGTKRILDEANVPVRSVSDLTHFPEIMDGRVKTLHPAVHGGILADRNKPQHLNELSEQHIDLIDMVVVNLYPFQQTVANPDVTMDEAIENIDIGGPTMLRAAAKNYKHVTTIVHPADYHEVLTRLRNDSLDESYRQSLMIKVFEHTAEYDEAIVRFFKGDKETLRYGENPQQSAYFVRTSNAKHTIAGAKQLHGKQLSYNNIKDADATLALVKKFDTPAAVAVKHMNPCGVGIGDTIEQAFQHAYEADSQSIFGGIVALNRAVTPELAEQLHSIFLEVIIAPKFTDEALDILKQKKNVRLLEIDMTIDSNEEEFVSVSGGYLVQDKDNYVVPKEEMKVVTEVAPTDEQWEAMLLGWKVVPSVKSNAIILSNNKQTVGIGAGQMNRVGAAKIALERAIEINDHVALVSDGFFPMGDTVELAAQHGIKAIIQPGGSIKDQDSIDMANKHGIAMVVTGTRHFKH</sequence>
<keyword id="KW-0378">Hydrolase</keyword>
<keyword id="KW-0511">Multifunctional enzyme</keyword>
<keyword id="KW-0658">Purine biosynthesis</keyword>
<keyword id="KW-0808">Transferase</keyword>
<dbReference type="EC" id="2.1.2.3" evidence="1"/>
<dbReference type="EC" id="3.5.4.10" evidence="1"/>
<dbReference type="EMBL" id="BA000018">
    <property type="protein sequence ID" value="BAB42170.1"/>
    <property type="status" value="ALT_INIT"/>
    <property type="molecule type" value="Genomic_DNA"/>
</dbReference>
<dbReference type="PIR" id="G89876">
    <property type="entry name" value="G89876"/>
</dbReference>
<dbReference type="RefSeq" id="WP_000709277.1">
    <property type="nucleotide sequence ID" value="NC_002745.2"/>
</dbReference>
<dbReference type="SMR" id="P67544"/>
<dbReference type="EnsemblBacteria" id="BAB42170">
    <property type="protein sequence ID" value="BAB42170"/>
    <property type="gene ID" value="BAB42170"/>
</dbReference>
<dbReference type="KEGG" id="sau:SA0925"/>
<dbReference type="HOGENOM" id="CLU_016316_5_2_9"/>
<dbReference type="UniPathway" id="UPA00074">
    <property type="reaction ID" value="UER00133"/>
</dbReference>
<dbReference type="UniPathway" id="UPA00074">
    <property type="reaction ID" value="UER00135"/>
</dbReference>
<dbReference type="GO" id="GO:0005829">
    <property type="term" value="C:cytosol"/>
    <property type="evidence" value="ECO:0007669"/>
    <property type="project" value="TreeGrafter"/>
</dbReference>
<dbReference type="GO" id="GO:0003937">
    <property type="term" value="F:IMP cyclohydrolase activity"/>
    <property type="evidence" value="ECO:0007669"/>
    <property type="project" value="UniProtKB-UniRule"/>
</dbReference>
<dbReference type="GO" id="GO:0004643">
    <property type="term" value="F:phosphoribosylaminoimidazolecarboxamide formyltransferase activity"/>
    <property type="evidence" value="ECO:0007669"/>
    <property type="project" value="UniProtKB-UniRule"/>
</dbReference>
<dbReference type="GO" id="GO:0006189">
    <property type="term" value="P:'de novo' IMP biosynthetic process"/>
    <property type="evidence" value="ECO:0007669"/>
    <property type="project" value="UniProtKB-UniRule"/>
</dbReference>
<dbReference type="CDD" id="cd01421">
    <property type="entry name" value="IMPCH"/>
    <property type="match status" value="1"/>
</dbReference>
<dbReference type="FunFam" id="3.40.140.20:FF:000001">
    <property type="entry name" value="Bifunctional purine biosynthesis protein PurH"/>
    <property type="match status" value="1"/>
</dbReference>
<dbReference type="FunFam" id="3.40.140.20:FF:000002">
    <property type="entry name" value="Bifunctional purine biosynthesis protein PurH"/>
    <property type="match status" value="1"/>
</dbReference>
<dbReference type="FunFam" id="3.40.50.1380:FF:000001">
    <property type="entry name" value="Bifunctional purine biosynthesis protein PurH"/>
    <property type="match status" value="1"/>
</dbReference>
<dbReference type="Gene3D" id="3.40.140.20">
    <property type="match status" value="2"/>
</dbReference>
<dbReference type="Gene3D" id="3.40.50.1380">
    <property type="entry name" value="Methylglyoxal synthase-like domain"/>
    <property type="match status" value="1"/>
</dbReference>
<dbReference type="HAMAP" id="MF_00139">
    <property type="entry name" value="PurH"/>
    <property type="match status" value="1"/>
</dbReference>
<dbReference type="InterPro" id="IPR024051">
    <property type="entry name" value="AICAR_Tfase_dup_dom_sf"/>
</dbReference>
<dbReference type="InterPro" id="IPR016193">
    <property type="entry name" value="Cytidine_deaminase-like"/>
</dbReference>
<dbReference type="InterPro" id="IPR011607">
    <property type="entry name" value="MGS-like_dom"/>
</dbReference>
<dbReference type="InterPro" id="IPR036914">
    <property type="entry name" value="MGS-like_dom_sf"/>
</dbReference>
<dbReference type="InterPro" id="IPR002695">
    <property type="entry name" value="PurH-like"/>
</dbReference>
<dbReference type="NCBIfam" id="NF002049">
    <property type="entry name" value="PRK00881.1"/>
    <property type="match status" value="1"/>
</dbReference>
<dbReference type="NCBIfam" id="TIGR00355">
    <property type="entry name" value="purH"/>
    <property type="match status" value="1"/>
</dbReference>
<dbReference type="PANTHER" id="PTHR11692:SF0">
    <property type="entry name" value="BIFUNCTIONAL PURINE BIOSYNTHESIS PROTEIN ATIC"/>
    <property type="match status" value="1"/>
</dbReference>
<dbReference type="PANTHER" id="PTHR11692">
    <property type="entry name" value="BIFUNCTIONAL PURINE BIOSYNTHESIS PROTEIN PURH"/>
    <property type="match status" value="1"/>
</dbReference>
<dbReference type="Pfam" id="PF01808">
    <property type="entry name" value="AICARFT_IMPCHas"/>
    <property type="match status" value="1"/>
</dbReference>
<dbReference type="Pfam" id="PF02142">
    <property type="entry name" value="MGS"/>
    <property type="match status" value="1"/>
</dbReference>
<dbReference type="PIRSF" id="PIRSF000414">
    <property type="entry name" value="AICARFT_IMPCHas"/>
    <property type="match status" value="1"/>
</dbReference>
<dbReference type="SMART" id="SM00798">
    <property type="entry name" value="AICARFT_IMPCHas"/>
    <property type="match status" value="1"/>
</dbReference>
<dbReference type="SMART" id="SM00851">
    <property type="entry name" value="MGS"/>
    <property type="match status" value="1"/>
</dbReference>
<dbReference type="SUPFAM" id="SSF53927">
    <property type="entry name" value="Cytidine deaminase-like"/>
    <property type="match status" value="1"/>
</dbReference>
<dbReference type="SUPFAM" id="SSF52335">
    <property type="entry name" value="Methylglyoxal synthase-like"/>
    <property type="match status" value="1"/>
</dbReference>
<dbReference type="PROSITE" id="PS51855">
    <property type="entry name" value="MGS"/>
    <property type="match status" value="1"/>
</dbReference>
<name>PUR9_STAAN</name>
<proteinExistence type="evidence at protein level"/>
<protein>
    <recommendedName>
        <fullName evidence="1">Bifunctional purine biosynthesis protein PurH</fullName>
    </recommendedName>
    <domain>
        <recommendedName>
            <fullName evidence="1">Phosphoribosylaminoimidazolecarboxamide formyltransferase</fullName>
            <ecNumber evidence="1">2.1.2.3</ecNumber>
        </recommendedName>
        <alternativeName>
            <fullName evidence="1">AICAR transformylase</fullName>
        </alternativeName>
    </domain>
    <domain>
        <recommendedName>
            <fullName evidence="1">IMP cyclohydrolase</fullName>
            <ecNumber evidence="1">3.5.4.10</ecNumber>
        </recommendedName>
        <alternativeName>
            <fullName evidence="1">ATIC</fullName>
        </alternativeName>
        <alternativeName>
            <fullName evidence="1">IMP synthase</fullName>
        </alternativeName>
        <alternativeName>
            <fullName evidence="1">Inosinicase</fullName>
        </alternativeName>
    </domain>
</protein>
<evidence type="ECO:0000255" key="1">
    <source>
        <dbReference type="HAMAP-Rule" id="MF_00139"/>
    </source>
</evidence>
<evidence type="ECO:0000255" key="2">
    <source>
        <dbReference type="PROSITE-ProRule" id="PRU01202"/>
    </source>
</evidence>
<evidence type="ECO:0000305" key="3"/>